<protein>
    <recommendedName>
        <fullName>Synaptotagmin-1</fullName>
    </recommendedName>
    <alternativeName>
        <fullName>NTMC2T1.1</fullName>
    </alternativeName>
    <alternativeName>
        <fullName>Synaptotagmin A</fullName>
    </alternativeName>
</protein>
<comment type="function">
    <text evidence="5 6 7 8 9">Plays an important role in maintaining plasma membrane integrity during freezing and osmotic stresses. May function in membrane resealing during calcium-dependent freezing tolerance. May regulate endocytosis and endosome recycling at the plasma membrane and cell-to-cell trafficking of cabbage leaf curl virus (CaLCuV) and tobacco mosaic virus (TMV) movement proteins via plasmodesmata.</text>
</comment>
<comment type="cofactor">
    <cofactor evidence="6">
        <name>Ca(2+)</name>
        <dbReference type="ChEBI" id="CHEBI:29108"/>
    </cofactor>
</comment>
<comment type="subunit">
    <text evidence="8 10">Interacts with cabbage leaf curl virus (CaLCuV) BC1 protein and tobacco mosaic virus (TMV) MP protein (PubMed:20133785). Interacts with ROSY1 (PubMed:27044028).</text>
</comment>
<comment type="subcellular location">
    <subcellularLocation>
        <location>Cell membrane</location>
        <topology evidence="11">Single-pass membrane protein</topology>
        <orientation>Cytoplasmic side</orientation>
    </subcellularLocation>
    <subcellularLocation>
        <location>Endosome membrane</location>
        <topology>Single-pass membrane protein</topology>
    </subcellularLocation>
</comment>
<comment type="alternative products">
    <event type="alternative splicing"/>
    <isoform>
        <id>Q9SKR2-1</id>
        <name>1</name>
        <sequence type="displayed"/>
    </isoform>
    <text>A number of isoforms are produced. According to EST sequences.</text>
</comment>
<comment type="tissue specificity">
    <text evidence="6 9">Expressed in roots, shoots, rosette and cauline leaves, inflorescences, and siliques. In roots, expressed in vascular bundle, epidermis, the differential zone of the tips of root hairs, and the quiescent center and columella of root tips.</text>
</comment>
<comment type="disruption phenotype">
    <text evidence="5 6">Reduced growth.</text>
</comment>
<comment type="miscellaneous">
    <text evidence="12">Phospholipid binding to the first C2 domain is calcium-dependent, but binding to the second C2 domain is calcium-independent.</text>
</comment>
<comment type="similarity">
    <text evidence="11">Belongs to the synaptotagmin family.</text>
</comment>
<dbReference type="EMBL" id="AB102951">
    <property type="protein sequence ID" value="BAC76812.1"/>
    <property type="molecule type" value="mRNA"/>
</dbReference>
<dbReference type="EMBL" id="AJ617630">
    <property type="protein sequence ID" value="CAE85115.1"/>
    <property type="molecule type" value="mRNA"/>
</dbReference>
<dbReference type="EMBL" id="AC006234">
    <property type="protein sequence ID" value="AAM15203.1"/>
    <property type="molecule type" value="Genomic_DNA"/>
</dbReference>
<dbReference type="EMBL" id="AC006264">
    <property type="protein sequence ID" value="AAD29817.2"/>
    <property type="molecule type" value="Genomic_DNA"/>
</dbReference>
<dbReference type="EMBL" id="CP002685">
    <property type="protein sequence ID" value="AEC07109.1"/>
    <property type="molecule type" value="Genomic_DNA"/>
</dbReference>
<dbReference type="EMBL" id="AY045836">
    <property type="protein sequence ID" value="AAK76510.1"/>
    <property type="molecule type" value="mRNA"/>
</dbReference>
<dbReference type="EMBL" id="BT004371">
    <property type="protein sequence ID" value="AAO42365.1"/>
    <property type="molecule type" value="mRNA"/>
</dbReference>
<dbReference type="EMBL" id="AY087925">
    <property type="protein sequence ID" value="AAM65475.1"/>
    <property type="molecule type" value="mRNA"/>
</dbReference>
<dbReference type="PIR" id="G84595">
    <property type="entry name" value="G84595"/>
</dbReference>
<dbReference type="RefSeq" id="NP_565495.1">
    <molecule id="Q9SKR2-1"/>
    <property type="nucleotide sequence ID" value="NM_127668.4"/>
</dbReference>
<dbReference type="PDB" id="7AS6">
    <property type="method" value="X-ray"/>
    <property type="resolution" value="2.00 A"/>
    <property type="chains" value="A=253-397"/>
</dbReference>
<dbReference type="PDB" id="7ATP">
    <property type="method" value="X-ray"/>
    <property type="resolution" value="2.10 A"/>
    <property type="chains" value="A=253-397"/>
</dbReference>
<dbReference type="PDBsum" id="7AS6"/>
<dbReference type="PDBsum" id="7ATP"/>
<dbReference type="SASBDB" id="Q9SKR2"/>
<dbReference type="SMR" id="Q9SKR2"/>
<dbReference type="BioGRID" id="1986">
    <property type="interactions" value="6"/>
</dbReference>
<dbReference type="FunCoup" id="Q9SKR2">
    <property type="interactions" value="2743"/>
</dbReference>
<dbReference type="IntAct" id="Q9SKR2">
    <property type="interactions" value="2"/>
</dbReference>
<dbReference type="STRING" id="3702.Q9SKR2"/>
<dbReference type="GlyGen" id="Q9SKR2">
    <property type="glycosylation" value="1 site"/>
</dbReference>
<dbReference type="iPTMnet" id="Q9SKR2"/>
<dbReference type="SwissPalm" id="Q9SKR2"/>
<dbReference type="PaxDb" id="3702-AT2G20990.3"/>
<dbReference type="EnsemblPlants" id="AT2G20990.1">
    <molecule id="Q9SKR2-1"/>
    <property type="protein sequence ID" value="AT2G20990.1"/>
    <property type="gene ID" value="AT2G20990"/>
</dbReference>
<dbReference type="GeneID" id="816633"/>
<dbReference type="Gramene" id="AT2G20990.1">
    <molecule id="Q9SKR2-1"/>
    <property type="protein sequence ID" value="AT2G20990.1"/>
    <property type="gene ID" value="AT2G20990"/>
</dbReference>
<dbReference type="KEGG" id="ath:AT2G20990"/>
<dbReference type="Araport" id="AT2G20990"/>
<dbReference type="TAIR" id="AT2G20990">
    <property type="gene designation" value="SYTA"/>
</dbReference>
<dbReference type="eggNOG" id="KOG1012">
    <property type="taxonomic scope" value="Eukaryota"/>
</dbReference>
<dbReference type="InParanoid" id="Q9SKR2"/>
<dbReference type="OrthoDB" id="67700at2759"/>
<dbReference type="PhylomeDB" id="Q9SKR2"/>
<dbReference type="CD-CODE" id="4299E36E">
    <property type="entry name" value="Nucleolus"/>
</dbReference>
<dbReference type="PRO" id="PR:Q9SKR2"/>
<dbReference type="Proteomes" id="UP000006548">
    <property type="component" value="Chromosome 2"/>
</dbReference>
<dbReference type="ExpressionAtlas" id="Q9SKR2">
    <property type="expression patterns" value="baseline and differential"/>
</dbReference>
<dbReference type="GO" id="GO:0010008">
    <property type="term" value="C:endosome membrane"/>
    <property type="evidence" value="ECO:0007669"/>
    <property type="project" value="UniProtKB-SubCell"/>
</dbReference>
<dbReference type="GO" id="GO:0005886">
    <property type="term" value="C:plasma membrane"/>
    <property type="evidence" value="ECO:0007669"/>
    <property type="project" value="UniProtKB-SubCell"/>
</dbReference>
<dbReference type="GO" id="GO:0008289">
    <property type="term" value="F:lipid binding"/>
    <property type="evidence" value="ECO:0007669"/>
    <property type="project" value="UniProtKB-KW"/>
</dbReference>
<dbReference type="GO" id="GO:0046872">
    <property type="term" value="F:metal ion binding"/>
    <property type="evidence" value="ECO:0007669"/>
    <property type="project" value="UniProtKB-KW"/>
</dbReference>
<dbReference type="GO" id="GO:0006897">
    <property type="term" value="P:endocytosis"/>
    <property type="evidence" value="ECO:0007669"/>
    <property type="project" value="UniProtKB-KW"/>
</dbReference>
<dbReference type="GO" id="GO:0006869">
    <property type="term" value="P:lipid transport"/>
    <property type="evidence" value="ECO:0007669"/>
    <property type="project" value="UniProtKB-KW"/>
</dbReference>
<dbReference type="CDD" id="cd00030">
    <property type="entry name" value="C2"/>
    <property type="match status" value="1"/>
</dbReference>
<dbReference type="CDD" id="cd21677">
    <property type="entry name" value="SMP_SYT"/>
    <property type="match status" value="1"/>
</dbReference>
<dbReference type="FunFam" id="2.60.40.150:FF:000066">
    <property type="entry name" value="Extended synaptotagmin-2"/>
    <property type="match status" value="1"/>
</dbReference>
<dbReference type="FunFam" id="2.60.40.150:FF:000102">
    <property type="entry name" value="Synaptotagmin-2 isoform A"/>
    <property type="match status" value="1"/>
</dbReference>
<dbReference type="Gene3D" id="2.60.40.150">
    <property type="entry name" value="C2 domain"/>
    <property type="match status" value="2"/>
</dbReference>
<dbReference type="InterPro" id="IPR000008">
    <property type="entry name" value="C2_dom"/>
</dbReference>
<dbReference type="InterPro" id="IPR035892">
    <property type="entry name" value="C2_domain_sf"/>
</dbReference>
<dbReference type="InterPro" id="IPR031468">
    <property type="entry name" value="SMP_LBD"/>
</dbReference>
<dbReference type="InterPro" id="IPR045050">
    <property type="entry name" value="Synaptotagmin_plant"/>
</dbReference>
<dbReference type="InterPro" id="IPR039010">
    <property type="entry name" value="Synaptotagmin_SMP"/>
</dbReference>
<dbReference type="PANTHER" id="PTHR10774:SF214">
    <property type="entry name" value="CALCIUM-DEPENDENT LIPID-BINDING (CALB DOMAIN) FAMILY PROTEIN-RELATED"/>
    <property type="match status" value="1"/>
</dbReference>
<dbReference type="PANTHER" id="PTHR10774">
    <property type="entry name" value="EXTENDED SYNAPTOTAGMIN-RELATED"/>
    <property type="match status" value="1"/>
</dbReference>
<dbReference type="Pfam" id="PF00168">
    <property type="entry name" value="C2"/>
    <property type="match status" value="2"/>
</dbReference>
<dbReference type="Pfam" id="PF17047">
    <property type="entry name" value="SMP_LBD"/>
    <property type="match status" value="1"/>
</dbReference>
<dbReference type="PRINTS" id="PR00360">
    <property type="entry name" value="C2DOMAIN"/>
</dbReference>
<dbReference type="SMART" id="SM00239">
    <property type="entry name" value="C2"/>
    <property type="match status" value="2"/>
</dbReference>
<dbReference type="SUPFAM" id="SSF49562">
    <property type="entry name" value="C2 domain (Calcium/lipid-binding domain, CaLB)"/>
    <property type="match status" value="2"/>
</dbReference>
<dbReference type="PROSITE" id="PS50004">
    <property type="entry name" value="C2"/>
    <property type="match status" value="2"/>
</dbReference>
<dbReference type="PROSITE" id="PS51847">
    <property type="entry name" value="SMP"/>
    <property type="match status" value="1"/>
</dbReference>
<reference key="1">
    <citation type="journal article" date="2003" name="J. Biochem.">
        <title>Molecular cloning, expression, and characterization of a novel class of synaptotagmin (Syt XIV) conserved from Drosophila to humans.</title>
        <authorList>
            <person name="Fukuda M."/>
        </authorList>
    </citation>
    <scope>NUCLEOTIDE SEQUENCE [MRNA]</scope>
</reference>
<reference key="2">
    <citation type="journal article" date="2004" name="BMC Genomics">
        <title>Synaptotagmin gene content of the sequenced genomes.</title>
        <authorList>
            <person name="Craxton M.A."/>
        </authorList>
    </citation>
    <scope>NUCLEOTIDE SEQUENCE [MRNA]</scope>
</reference>
<reference key="3">
    <citation type="journal article" date="1999" name="Nature">
        <title>Sequence and analysis of chromosome 2 of the plant Arabidopsis thaliana.</title>
        <authorList>
            <person name="Lin X."/>
            <person name="Kaul S."/>
            <person name="Rounsley S.D."/>
            <person name="Shea T.P."/>
            <person name="Benito M.-I."/>
            <person name="Town C.D."/>
            <person name="Fujii C.Y."/>
            <person name="Mason T.M."/>
            <person name="Bowman C.L."/>
            <person name="Barnstead M.E."/>
            <person name="Feldblyum T.V."/>
            <person name="Buell C.R."/>
            <person name="Ketchum K.A."/>
            <person name="Lee J.J."/>
            <person name="Ronning C.M."/>
            <person name="Koo H.L."/>
            <person name="Moffat K.S."/>
            <person name="Cronin L.A."/>
            <person name="Shen M."/>
            <person name="Pai G."/>
            <person name="Van Aken S."/>
            <person name="Umayam L."/>
            <person name="Tallon L.J."/>
            <person name="Gill J.E."/>
            <person name="Adams M.D."/>
            <person name="Carrera A.J."/>
            <person name="Creasy T.H."/>
            <person name="Goodman H.M."/>
            <person name="Somerville C.R."/>
            <person name="Copenhaver G.P."/>
            <person name="Preuss D."/>
            <person name="Nierman W.C."/>
            <person name="White O."/>
            <person name="Eisen J.A."/>
            <person name="Salzberg S.L."/>
            <person name="Fraser C.M."/>
            <person name="Venter J.C."/>
        </authorList>
    </citation>
    <scope>NUCLEOTIDE SEQUENCE [LARGE SCALE GENOMIC DNA]</scope>
    <source>
        <strain>cv. Columbia</strain>
    </source>
</reference>
<reference key="4">
    <citation type="journal article" date="2017" name="Plant J.">
        <title>Araport11: a complete reannotation of the Arabidopsis thaliana reference genome.</title>
        <authorList>
            <person name="Cheng C.Y."/>
            <person name="Krishnakumar V."/>
            <person name="Chan A.P."/>
            <person name="Thibaud-Nissen F."/>
            <person name="Schobel S."/>
            <person name="Town C.D."/>
        </authorList>
    </citation>
    <scope>GENOME REANNOTATION</scope>
    <source>
        <strain>cv. Columbia</strain>
    </source>
</reference>
<reference key="5">
    <citation type="journal article" date="2003" name="Science">
        <title>Empirical analysis of transcriptional activity in the Arabidopsis genome.</title>
        <authorList>
            <person name="Yamada K."/>
            <person name="Lim J."/>
            <person name="Dale J.M."/>
            <person name="Chen H."/>
            <person name="Shinn P."/>
            <person name="Palm C.J."/>
            <person name="Southwick A.M."/>
            <person name="Wu H.C."/>
            <person name="Kim C.J."/>
            <person name="Nguyen M."/>
            <person name="Pham P.K."/>
            <person name="Cheuk R.F."/>
            <person name="Karlin-Newmann G."/>
            <person name="Liu S.X."/>
            <person name="Lam B."/>
            <person name="Sakano H."/>
            <person name="Wu T."/>
            <person name="Yu G."/>
            <person name="Miranda M."/>
            <person name="Quach H.L."/>
            <person name="Tripp M."/>
            <person name="Chang C.H."/>
            <person name="Lee J.M."/>
            <person name="Toriumi M.J."/>
            <person name="Chan M.M."/>
            <person name="Tang C.C."/>
            <person name="Onodera C.S."/>
            <person name="Deng J.M."/>
            <person name="Akiyama K."/>
            <person name="Ansari Y."/>
            <person name="Arakawa T."/>
            <person name="Banh J."/>
            <person name="Banno F."/>
            <person name="Bowser L."/>
            <person name="Brooks S.Y."/>
            <person name="Carninci P."/>
            <person name="Chao Q."/>
            <person name="Choy N."/>
            <person name="Enju A."/>
            <person name="Goldsmith A.D."/>
            <person name="Gurjal M."/>
            <person name="Hansen N.F."/>
            <person name="Hayashizaki Y."/>
            <person name="Johnson-Hopson C."/>
            <person name="Hsuan V.W."/>
            <person name="Iida K."/>
            <person name="Karnes M."/>
            <person name="Khan S."/>
            <person name="Koesema E."/>
            <person name="Ishida J."/>
            <person name="Jiang P.X."/>
            <person name="Jones T."/>
            <person name="Kawai J."/>
            <person name="Kamiya A."/>
            <person name="Meyers C."/>
            <person name="Nakajima M."/>
            <person name="Narusaka M."/>
            <person name="Seki M."/>
            <person name="Sakurai T."/>
            <person name="Satou M."/>
            <person name="Tamse R."/>
            <person name="Vaysberg M."/>
            <person name="Wallender E.K."/>
            <person name="Wong C."/>
            <person name="Yamamura Y."/>
            <person name="Yuan S."/>
            <person name="Shinozaki K."/>
            <person name="Davis R.W."/>
            <person name="Theologis A."/>
            <person name="Ecker J.R."/>
        </authorList>
    </citation>
    <scope>NUCLEOTIDE SEQUENCE [LARGE SCALE MRNA]</scope>
    <source>
        <strain>cv. Columbia</strain>
    </source>
</reference>
<reference key="6">
    <citation type="journal article" date="2008" name="Plant Cell">
        <title>Arabidopsis synaptotagmin1 maintains plasma membrane integrity.</title>
        <authorList>
            <person name="Eckardt N.A."/>
        </authorList>
    </citation>
    <scope>FUNCTION</scope>
    <scope>DISRUPTION PHENOTYPE</scope>
</reference>
<reference key="7">
    <citation type="journal article" date="2008" name="Plant Cell">
        <title>Arabidopsis synaptotagmin 1 is required for the maintenance of plasma membrane integrity and cell viability.</title>
        <authorList>
            <person name="Schapire A.L."/>
            <person name="Voigt B."/>
            <person name="Jasik J."/>
            <person name="Rosado A."/>
            <person name="Lopez-Cobollo R."/>
            <person name="Menzel D."/>
            <person name="Salinas J."/>
            <person name="Mancuso S."/>
            <person name="Valpuesta V."/>
            <person name="Baluska F."/>
            <person name="Botella M.A."/>
        </authorList>
    </citation>
    <scope>FUNCTION</scope>
    <scope>COFACTOR</scope>
    <scope>SUBCELLULAR LOCATION</scope>
    <scope>TISSUE SPECIFICITY</scope>
    <scope>DISRUPTION PHENOTYPE</scope>
</reference>
<reference key="8">
    <citation type="journal article" date="2008" name="Plant Cell">
        <title>Calcium-dependent freezing tolerance in Arabidopsis involves membrane resealing via synaptotagmin SYT1.</title>
        <authorList>
            <person name="Yamazaki T."/>
            <person name="Kawamura Y."/>
            <person name="Minami A."/>
            <person name="Uemura M."/>
        </authorList>
    </citation>
    <scope>FUNCTION</scope>
    <scope>SUBCELLULAR LOCATION</scope>
    <scope>TOPOLOGY</scope>
</reference>
<reference key="9">
    <citation type="journal article" date="2010" name="J. Biol. Chem.">
        <title>Arabidopsis synaptotagmin SYT1, a type I signal-anchor protein, requires tandem C2 domains for delivery to the plasma membrane.</title>
        <authorList>
            <person name="Yamazaki T."/>
            <person name="Takata N."/>
            <person name="Uemura M."/>
            <person name="Kawamura Y."/>
        </authorList>
    </citation>
    <scope>FUNCTION</scope>
    <scope>SUBCELLULAR LOCATION</scope>
    <scope>TISSUE SPECIFICITY</scope>
</reference>
<reference key="10">
    <citation type="journal article" date="2010" name="Proc. Natl. Acad. Sci. U.S.A.">
        <title>Arabidopsis synaptotagmin SYTA regulates endocytosis and virus movement protein cell-to-cell transport.</title>
        <authorList>
            <person name="Lewis J.D."/>
            <person name="Lazarowitz S.G."/>
        </authorList>
    </citation>
    <scope>FUNCTION</scope>
    <scope>SUBCELLULAR LOCATION</scope>
    <scope>INTERACTION WITH CABBAGE LEAF CURL VIRUS BC1 AND TOBACCO MOSAIC VIRUS MP</scope>
</reference>
<reference key="11">
    <citation type="journal article" date="2016" name="J. Plant Physiol.">
        <title>ROSY1, a novel regulator of gravitropic response is a stigmasterol binding protein.</title>
        <authorList>
            <person name="Dalal J."/>
            <person name="Lewis D.R."/>
            <person name="Tietz O."/>
            <person name="Brown E.M."/>
            <person name="Brown C.S."/>
            <person name="Palme K."/>
            <person name="Muday G.K."/>
            <person name="Sederoff H.W."/>
        </authorList>
    </citation>
    <scope>INTERACTION WITH ROSY1</scope>
</reference>
<proteinExistence type="evidence at protein level"/>
<sequence>MGFFSTILGFCGFGVGISLGLVIGYVLFVYLLPNDVKDPEIRSIADQDPKAMLRMLPEIPLWVKNPDFDRVDWINRFLEYMWPYLDKAICKTAKNIAKPIIEEQIPKYKIDSVEFETLTLGSLPPTFQGMKVYLTDEKELIMEPCLKWAANPNILVAIKAFGLKATVQVVDLQVFAQPRITLKPLVPSFPCFANIYVSLMEKPHVDFGLKLGGADLMSIPGLYRFVQEQIKDQVANMYLWPKTLVVPILDPAKAFRRPVGIVHVKVVRAVGLRKKDLMGGADPFVKIKLSEDKIPSKKTTVKHKNLNPEWNEEFKFSVRDPQTQVLEFSVYDWEQVGNPEKMGMNVLALKEMVPDEHKAFTLELRKTLDGGEDGQPPDKYRGKLEVELLYKPFTEEEMPKGFEETQAVQKAPEGTPAAGGMLVVIVHSAEDVEGKHHTNPYVRIYFKGEERKTKHVKKNRDPRWNEEFTFMLEEPPVREKLHVEVLSTSSRIGLLHPKETLGYVDIPVVDVVNNKRMNQKFHLIDSKNGKIQIELEWRTAS</sequence>
<keyword id="KW-0002">3D-structure</keyword>
<keyword id="KW-0025">Alternative splicing</keyword>
<keyword id="KW-0106">Calcium</keyword>
<keyword id="KW-1003">Cell membrane</keyword>
<keyword id="KW-0254">Endocytosis</keyword>
<keyword id="KW-0967">Endosome</keyword>
<keyword id="KW-0945">Host-virus interaction</keyword>
<keyword id="KW-0445">Lipid transport</keyword>
<keyword id="KW-0446">Lipid-binding</keyword>
<keyword id="KW-0472">Membrane</keyword>
<keyword id="KW-0479">Metal-binding</keyword>
<keyword id="KW-1185">Reference proteome</keyword>
<keyword id="KW-0677">Repeat</keyword>
<keyword id="KW-0812">Transmembrane</keyword>
<keyword id="KW-1133">Transmembrane helix</keyword>
<keyword id="KW-0813">Transport</keyword>
<feature type="chain" id="PRO_0000419238" description="Synaptotagmin-1">
    <location>
        <begin position="1"/>
        <end position="541"/>
    </location>
</feature>
<feature type="topological domain" description="Extracellular" evidence="13">
    <location>
        <begin position="1"/>
        <end position="11"/>
    </location>
</feature>
<feature type="transmembrane region" description="Helical" evidence="2">
    <location>
        <begin position="12"/>
        <end position="32"/>
    </location>
</feature>
<feature type="topological domain" description="Cytoplasmic" evidence="7">
    <location>
        <begin position="33"/>
        <end position="541"/>
    </location>
</feature>
<feature type="domain" description="SMP-LTD" evidence="4">
    <location>
        <begin position="67"/>
        <end position="249"/>
    </location>
</feature>
<feature type="domain" description="C2 1" evidence="3">
    <location>
        <begin position="240"/>
        <end position="362"/>
    </location>
</feature>
<feature type="domain" description="C2 2" evidence="3">
    <location>
        <begin position="401"/>
        <end position="521"/>
    </location>
</feature>
<feature type="region of interest" description="Phospholipid binding" evidence="1">
    <location>
        <begin position="227"/>
        <end position="509"/>
    </location>
</feature>
<feature type="binding site" evidence="1">
    <location>
        <position position="276"/>
    </location>
    <ligand>
        <name>Ca(2+)</name>
        <dbReference type="ChEBI" id="CHEBI:29108"/>
    </ligand>
</feature>
<feature type="binding site" evidence="1">
    <location>
        <position position="282"/>
    </location>
    <ligand>
        <name>Ca(2+)</name>
        <dbReference type="ChEBI" id="CHEBI:29108"/>
    </ligand>
</feature>
<feature type="binding site" evidence="1">
    <location>
        <position position="332"/>
    </location>
    <ligand>
        <name>Ca(2+)</name>
        <dbReference type="ChEBI" id="CHEBI:29108"/>
    </ligand>
</feature>
<feature type="binding site" evidence="1">
    <location>
        <position position="334"/>
    </location>
    <ligand>
        <name>Ca(2+)</name>
        <dbReference type="ChEBI" id="CHEBI:29108"/>
    </ligand>
</feature>
<feature type="strand" evidence="14">
    <location>
        <begin position="260"/>
        <end position="271"/>
    </location>
</feature>
<feature type="strand" evidence="14">
    <location>
        <begin position="276"/>
        <end position="280"/>
    </location>
</feature>
<feature type="strand" evidence="14">
    <location>
        <begin position="283"/>
        <end position="291"/>
    </location>
</feature>
<feature type="strand" evidence="14">
    <location>
        <begin position="309"/>
        <end position="319"/>
    </location>
</feature>
<feature type="turn" evidence="14">
    <location>
        <begin position="321"/>
        <end position="323"/>
    </location>
</feature>
<feature type="strand" evidence="14">
    <location>
        <begin position="325"/>
        <end position="332"/>
    </location>
</feature>
<feature type="strand" evidence="14">
    <location>
        <begin position="335"/>
        <end position="337"/>
    </location>
</feature>
<feature type="strand" evidence="14">
    <location>
        <begin position="340"/>
        <end position="348"/>
    </location>
</feature>
<feature type="helix" evidence="14">
    <location>
        <begin position="349"/>
        <end position="351"/>
    </location>
</feature>
<feature type="strand" evidence="14">
    <location>
        <begin position="358"/>
        <end position="363"/>
    </location>
</feature>
<feature type="strand" evidence="14">
    <location>
        <begin position="383"/>
        <end position="392"/>
    </location>
</feature>
<evidence type="ECO:0000250" key="1"/>
<evidence type="ECO:0000255" key="2"/>
<evidence type="ECO:0000255" key="3">
    <source>
        <dbReference type="PROSITE-ProRule" id="PRU00041"/>
    </source>
</evidence>
<evidence type="ECO:0000255" key="4">
    <source>
        <dbReference type="PROSITE-ProRule" id="PRU01194"/>
    </source>
</evidence>
<evidence type="ECO:0000269" key="5">
    <source>
    </source>
</evidence>
<evidence type="ECO:0000269" key="6">
    <source>
    </source>
</evidence>
<evidence type="ECO:0000269" key="7">
    <source>
    </source>
</evidence>
<evidence type="ECO:0000269" key="8">
    <source>
    </source>
</evidence>
<evidence type="ECO:0000269" key="9">
    <source>
    </source>
</evidence>
<evidence type="ECO:0000269" key="10">
    <source>
    </source>
</evidence>
<evidence type="ECO:0000305" key="11"/>
<evidence type="ECO:0000305" key="12">
    <source>
    </source>
</evidence>
<evidence type="ECO:0000305" key="13">
    <source>
    </source>
</evidence>
<evidence type="ECO:0007829" key="14">
    <source>
        <dbReference type="PDB" id="7AS6"/>
    </source>
</evidence>
<accession>Q9SKR2</accession>
<accession>Q94AS0</accession>
<name>SYT1_ARATH</name>
<gene>
    <name type="primary">SYT1</name>
    <name type="synonym">SYTA</name>
    <name type="ordered locus">At2g20990</name>
    <name type="ORF">F26H11.25</name>
    <name type="ORF">F5H14.5</name>
</gene>
<organism>
    <name type="scientific">Arabidopsis thaliana</name>
    <name type="common">Mouse-ear cress</name>
    <dbReference type="NCBI Taxonomy" id="3702"/>
    <lineage>
        <taxon>Eukaryota</taxon>
        <taxon>Viridiplantae</taxon>
        <taxon>Streptophyta</taxon>
        <taxon>Embryophyta</taxon>
        <taxon>Tracheophyta</taxon>
        <taxon>Spermatophyta</taxon>
        <taxon>Magnoliopsida</taxon>
        <taxon>eudicotyledons</taxon>
        <taxon>Gunneridae</taxon>
        <taxon>Pentapetalae</taxon>
        <taxon>rosids</taxon>
        <taxon>malvids</taxon>
        <taxon>Brassicales</taxon>
        <taxon>Brassicaceae</taxon>
        <taxon>Camelineae</taxon>
        <taxon>Arabidopsis</taxon>
    </lineage>
</organism>